<accession>Q0G9M1</accession>
<geneLocation type="chloroplast"/>
<dbReference type="EMBL" id="DQ899947">
    <property type="protein sequence ID" value="ABI32507.1"/>
    <property type="molecule type" value="Genomic_DNA"/>
</dbReference>
<dbReference type="RefSeq" id="YP_740200.1">
    <property type="nucleotide sequence ID" value="NC_008326.1"/>
</dbReference>
<dbReference type="SMR" id="Q0G9M1"/>
<dbReference type="GeneID" id="4266616"/>
<dbReference type="GO" id="GO:0009507">
    <property type="term" value="C:chloroplast"/>
    <property type="evidence" value="ECO:0007669"/>
    <property type="project" value="UniProtKB-SubCell"/>
</dbReference>
<dbReference type="GO" id="GO:0015935">
    <property type="term" value="C:small ribosomal subunit"/>
    <property type="evidence" value="ECO:0007669"/>
    <property type="project" value="TreeGrafter"/>
</dbReference>
<dbReference type="GO" id="GO:0019843">
    <property type="term" value="F:rRNA binding"/>
    <property type="evidence" value="ECO:0007669"/>
    <property type="project" value="UniProtKB-UniRule"/>
</dbReference>
<dbReference type="GO" id="GO:0003735">
    <property type="term" value="F:structural constituent of ribosome"/>
    <property type="evidence" value="ECO:0007669"/>
    <property type="project" value="InterPro"/>
</dbReference>
<dbReference type="GO" id="GO:0006412">
    <property type="term" value="P:translation"/>
    <property type="evidence" value="ECO:0007669"/>
    <property type="project" value="UniProtKB-UniRule"/>
</dbReference>
<dbReference type="FunFam" id="1.10.287.1480:FF:000001">
    <property type="entry name" value="30S ribosomal protein S14"/>
    <property type="match status" value="1"/>
</dbReference>
<dbReference type="Gene3D" id="1.10.287.1480">
    <property type="match status" value="1"/>
</dbReference>
<dbReference type="HAMAP" id="MF_00537">
    <property type="entry name" value="Ribosomal_uS14_1"/>
    <property type="match status" value="1"/>
</dbReference>
<dbReference type="InterPro" id="IPR001209">
    <property type="entry name" value="Ribosomal_uS14"/>
</dbReference>
<dbReference type="InterPro" id="IPR023036">
    <property type="entry name" value="Ribosomal_uS14_bac/plastid"/>
</dbReference>
<dbReference type="InterPro" id="IPR018271">
    <property type="entry name" value="Ribosomal_uS14_CS"/>
</dbReference>
<dbReference type="NCBIfam" id="NF006477">
    <property type="entry name" value="PRK08881.1"/>
    <property type="match status" value="1"/>
</dbReference>
<dbReference type="PANTHER" id="PTHR19836">
    <property type="entry name" value="30S RIBOSOMAL PROTEIN S14"/>
    <property type="match status" value="1"/>
</dbReference>
<dbReference type="PANTHER" id="PTHR19836:SF19">
    <property type="entry name" value="SMALL RIBOSOMAL SUBUNIT PROTEIN US14M"/>
    <property type="match status" value="1"/>
</dbReference>
<dbReference type="Pfam" id="PF00253">
    <property type="entry name" value="Ribosomal_S14"/>
    <property type="match status" value="1"/>
</dbReference>
<dbReference type="SUPFAM" id="SSF57716">
    <property type="entry name" value="Glucocorticoid receptor-like (DNA-binding domain)"/>
    <property type="match status" value="1"/>
</dbReference>
<dbReference type="PROSITE" id="PS00527">
    <property type="entry name" value="RIBOSOMAL_S14"/>
    <property type="match status" value="1"/>
</dbReference>
<proteinExistence type="inferred from homology"/>
<comment type="function">
    <text evidence="1">Binds 16S rRNA, required for the assembly of 30S particles.</text>
</comment>
<comment type="subunit">
    <text evidence="1">Part of the 30S ribosomal subunit.</text>
</comment>
<comment type="subcellular location">
    <subcellularLocation>
        <location>Plastid</location>
        <location>Chloroplast</location>
    </subcellularLocation>
</comment>
<comment type="similarity">
    <text evidence="1">Belongs to the universal ribosomal protein uS14 family.</text>
</comment>
<reference key="1">
    <citation type="journal article" date="2006" name="BMC Evol. Biol.">
        <title>Complete plastid genome sequences of Drimys, Liriodendron, and Piper: implications for the phylogenetic relationships of magnoliids.</title>
        <authorList>
            <person name="Cai Z."/>
            <person name="Penaflor C."/>
            <person name="Kuehl J.V."/>
            <person name="Leebens-Mack J."/>
            <person name="Carlson J.E."/>
            <person name="dePamphilis C.W."/>
            <person name="Boore J.L."/>
            <person name="Jansen R.K."/>
        </authorList>
    </citation>
    <scope>NUCLEOTIDE SEQUENCE [LARGE SCALE GENOMIC DNA]</scope>
</reference>
<sequence length="100" mass="11761">MARKSLIQRERKRQKLEQKYHLIRRSSKKEISKVSSLSDKWEIHGKLQSPPRNSAPTRLHRRCFSTGRPRANYRDFGLSGHILRERVHACLLPGATRSSW</sequence>
<evidence type="ECO:0000255" key="1">
    <source>
        <dbReference type="HAMAP-Rule" id="MF_00537"/>
    </source>
</evidence>
<evidence type="ECO:0000305" key="2"/>
<gene>
    <name evidence="1" type="primary">rps14</name>
</gene>
<organism>
    <name type="scientific">Liriodendron tulipifera</name>
    <name type="common">Tuliptree</name>
    <name type="synonym">Tulip poplar</name>
    <dbReference type="NCBI Taxonomy" id="3415"/>
    <lineage>
        <taxon>Eukaryota</taxon>
        <taxon>Viridiplantae</taxon>
        <taxon>Streptophyta</taxon>
        <taxon>Embryophyta</taxon>
        <taxon>Tracheophyta</taxon>
        <taxon>Spermatophyta</taxon>
        <taxon>Magnoliopsida</taxon>
        <taxon>Magnoliidae</taxon>
        <taxon>Magnoliales</taxon>
        <taxon>Magnoliaceae</taxon>
        <taxon>Liriodendron</taxon>
    </lineage>
</organism>
<keyword id="KW-0150">Chloroplast</keyword>
<keyword id="KW-0934">Plastid</keyword>
<keyword id="KW-0687">Ribonucleoprotein</keyword>
<keyword id="KW-0689">Ribosomal protein</keyword>
<keyword id="KW-0694">RNA-binding</keyword>
<keyword id="KW-0699">rRNA-binding</keyword>
<protein>
    <recommendedName>
        <fullName evidence="1">Small ribosomal subunit protein uS14c</fullName>
    </recommendedName>
    <alternativeName>
        <fullName evidence="2">30S ribosomal protein S14, chloroplastic</fullName>
    </alternativeName>
</protein>
<name>RR14_LIRTU</name>
<feature type="chain" id="PRO_0000276684" description="Small ribosomal subunit protein uS14c">
    <location>
        <begin position="1"/>
        <end position="100"/>
    </location>
</feature>